<sequence length="336" mass="36019">MSFLSKNGAGILACLLISILSWYLGGFFPVIGAPVFAIFIGMLLHPFLSSYKQLDAGLTFSSKKLLQYAVVLLGFGLNISQVFAVGQSSLPVILSTISIALIIAYLFQRFFALDTKLATLVGVGSSICGGSAIAATAPVIHAKEKEVAQAISVIFFFNVLAALIFPTLGTWLHLSNEGFALFAGTAVNDTSSVTAAASAWDSLYQSNTLESATIVKLTRTLAIIPITLFLSYWQSRQQENKQSLQLKKVFPLFILYFILASLLTTLLTSLGVSSSFFTPLKQLSKFLIVMAMSAIGLKTNLVAMVKSSGKSILLGAICWIAIILTTLGMQTLIGIF</sequence>
<feature type="chain" id="PRO_0000157463" description="UPF0324 membrane protein spr0034">
    <location>
        <begin position="1"/>
        <end position="336"/>
    </location>
</feature>
<feature type="transmembrane region" description="Helical" evidence="1">
    <location>
        <begin position="65"/>
        <end position="84"/>
    </location>
</feature>
<feature type="transmembrane region" description="Helical" evidence="1">
    <location>
        <begin position="91"/>
        <end position="113"/>
    </location>
</feature>
<feature type="transmembrane region" description="Helical" evidence="1">
    <location>
        <begin position="118"/>
        <end position="140"/>
    </location>
</feature>
<feature type="transmembrane region" description="Helical" evidence="1">
    <location>
        <begin position="153"/>
        <end position="175"/>
    </location>
</feature>
<feature type="transmembrane region" description="Helical" evidence="1">
    <location>
        <begin position="211"/>
        <end position="233"/>
    </location>
</feature>
<feature type="transmembrane region" description="Helical" evidence="1">
    <location>
        <begin position="249"/>
        <end position="271"/>
    </location>
</feature>
<feature type="transmembrane region" description="Helical" evidence="1">
    <location>
        <begin position="286"/>
        <end position="305"/>
    </location>
</feature>
<feature type="transmembrane region" description="Helical" evidence="1">
    <location>
        <begin position="312"/>
        <end position="334"/>
    </location>
</feature>
<keyword id="KW-1003">Cell membrane</keyword>
<keyword id="KW-0472">Membrane</keyword>
<keyword id="KW-1185">Reference proteome</keyword>
<keyword id="KW-0812">Transmembrane</keyword>
<keyword id="KW-1133">Transmembrane helix</keyword>
<evidence type="ECO:0000255" key="1"/>
<evidence type="ECO:0000305" key="2"/>
<name>Y034_STRR6</name>
<comment type="subcellular location">
    <subcellularLocation>
        <location evidence="2">Cell membrane</location>
        <topology evidence="2">Multi-pass membrane protein</topology>
    </subcellularLocation>
</comment>
<comment type="similarity">
    <text evidence="2">Belongs to the UPF0324 family.</text>
</comment>
<comment type="sequence caution" evidence="2">
    <conflict type="erroneous initiation">
        <sequence resource="EMBL-CDS" id="AAK98838"/>
    </conflict>
</comment>
<gene>
    <name type="ordered locus">spr0034</name>
</gene>
<accession>Q8DRN6</accession>
<proteinExistence type="inferred from homology"/>
<organism>
    <name type="scientific">Streptococcus pneumoniae (strain ATCC BAA-255 / R6)</name>
    <dbReference type="NCBI Taxonomy" id="171101"/>
    <lineage>
        <taxon>Bacteria</taxon>
        <taxon>Bacillati</taxon>
        <taxon>Bacillota</taxon>
        <taxon>Bacilli</taxon>
        <taxon>Lactobacillales</taxon>
        <taxon>Streptococcaceae</taxon>
        <taxon>Streptococcus</taxon>
    </lineage>
</organism>
<reference key="1">
    <citation type="journal article" date="2001" name="J. Bacteriol.">
        <title>Genome of the bacterium Streptococcus pneumoniae strain R6.</title>
        <authorList>
            <person name="Hoskins J."/>
            <person name="Alborn W.E. Jr."/>
            <person name="Arnold J."/>
            <person name="Blaszczak L.C."/>
            <person name="Burgett S."/>
            <person name="DeHoff B.S."/>
            <person name="Estrem S.T."/>
            <person name="Fritz L."/>
            <person name="Fu D.-J."/>
            <person name="Fuller W."/>
            <person name="Geringer C."/>
            <person name="Gilmour R."/>
            <person name="Glass J.S."/>
            <person name="Khoja H."/>
            <person name="Kraft A.R."/>
            <person name="Lagace R.E."/>
            <person name="LeBlanc D.J."/>
            <person name="Lee L.N."/>
            <person name="Lefkowitz E.J."/>
            <person name="Lu J."/>
            <person name="Matsushima P."/>
            <person name="McAhren S.M."/>
            <person name="McHenney M."/>
            <person name="McLeaster K."/>
            <person name="Mundy C.W."/>
            <person name="Nicas T.I."/>
            <person name="Norris F.H."/>
            <person name="O'Gara M."/>
            <person name="Peery R.B."/>
            <person name="Robertson G.T."/>
            <person name="Rockey P."/>
            <person name="Sun P.-M."/>
            <person name="Winkler M.E."/>
            <person name="Yang Y."/>
            <person name="Young-Bellido M."/>
            <person name="Zhao G."/>
            <person name="Zook C.A."/>
            <person name="Baltz R.H."/>
            <person name="Jaskunas S.R."/>
            <person name="Rosteck P.R. Jr."/>
            <person name="Skatrud P.L."/>
            <person name="Glass J.I."/>
        </authorList>
    </citation>
    <scope>NUCLEOTIDE SEQUENCE [LARGE SCALE GENOMIC DNA]</scope>
    <source>
        <strain>ATCC BAA-255 / R6</strain>
    </source>
</reference>
<protein>
    <recommendedName>
        <fullName>UPF0324 membrane protein spr0034</fullName>
    </recommendedName>
</protein>
<dbReference type="EMBL" id="AE007317">
    <property type="protein sequence ID" value="AAK98838.1"/>
    <property type="status" value="ALT_INIT"/>
    <property type="molecule type" value="Genomic_DNA"/>
</dbReference>
<dbReference type="PIR" id="B97876">
    <property type="entry name" value="B97876"/>
</dbReference>
<dbReference type="RefSeq" id="NP_357628.1">
    <property type="nucleotide sequence ID" value="NC_003098.1"/>
</dbReference>
<dbReference type="RefSeq" id="WP_000009141.1">
    <property type="nucleotide sequence ID" value="NC_003098.1"/>
</dbReference>
<dbReference type="STRING" id="171101.spr0034"/>
<dbReference type="KEGG" id="spr:spr0034"/>
<dbReference type="PATRIC" id="fig|171101.6.peg.40"/>
<dbReference type="eggNOG" id="COG2855">
    <property type="taxonomic scope" value="Bacteria"/>
</dbReference>
<dbReference type="HOGENOM" id="CLU_033541_2_1_9"/>
<dbReference type="Proteomes" id="UP000000586">
    <property type="component" value="Chromosome"/>
</dbReference>
<dbReference type="GO" id="GO:0005886">
    <property type="term" value="C:plasma membrane"/>
    <property type="evidence" value="ECO:0000318"/>
    <property type="project" value="GO_Central"/>
</dbReference>
<dbReference type="InterPro" id="IPR018383">
    <property type="entry name" value="UPF0324_pro"/>
</dbReference>
<dbReference type="PANTHER" id="PTHR30106">
    <property type="entry name" value="INNER MEMBRANE PROTEIN YEIH-RELATED"/>
    <property type="match status" value="1"/>
</dbReference>
<dbReference type="PANTHER" id="PTHR30106:SF1">
    <property type="entry name" value="UPF0324 MEMBRANE PROTEIN FN0533"/>
    <property type="match status" value="1"/>
</dbReference>
<dbReference type="Pfam" id="PF03601">
    <property type="entry name" value="Cons_hypoth698"/>
    <property type="match status" value="1"/>
</dbReference>